<protein>
    <recommendedName>
        <fullName evidence="1">Putative manganese efflux pump MntP</fullName>
    </recommendedName>
</protein>
<name>MNTP_BACP2</name>
<proteinExistence type="inferred from homology"/>
<keyword id="KW-1003">Cell membrane</keyword>
<keyword id="KW-0406">Ion transport</keyword>
<keyword id="KW-0464">Manganese</keyword>
<keyword id="KW-0472">Membrane</keyword>
<keyword id="KW-0812">Transmembrane</keyword>
<keyword id="KW-1133">Transmembrane helix</keyword>
<keyword id="KW-0813">Transport</keyword>
<accession>A8FIC5</accession>
<comment type="function">
    <text evidence="1">Probably functions as a manganese efflux pump.</text>
</comment>
<comment type="subcellular location">
    <subcellularLocation>
        <location evidence="1">Cell membrane</location>
        <topology evidence="1">Multi-pass membrane protein</topology>
    </subcellularLocation>
</comment>
<comment type="similarity">
    <text evidence="1">Belongs to the MntP (TC 9.B.29) family.</text>
</comment>
<organism>
    <name type="scientific">Bacillus pumilus (strain SAFR-032)</name>
    <dbReference type="NCBI Taxonomy" id="315750"/>
    <lineage>
        <taxon>Bacteria</taxon>
        <taxon>Bacillati</taxon>
        <taxon>Bacillota</taxon>
        <taxon>Bacilli</taxon>
        <taxon>Bacillales</taxon>
        <taxon>Bacillaceae</taxon>
        <taxon>Bacillus</taxon>
    </lineage>
</organism>
<gene>
    <name evidence="1" type="primary">mntP</name>
    <name type="ordered locus">BPUM_3339</name>
</gene>
<feature type="chain" id="PRO_0000315559" description="Putative manganese efflux pump MntP">
    <location>
        <begin position="1"/>
        <end position="184"/>
    </location>
</feature>
<feature type="transmembrane region" description="Helical" evidence="1">
    <location>
        <begin position="12"/>
        <end position="32"/>
    </location>
</feature>
<feature type="transmembrane region" description="Helical" evidence="1">
    <location>
        <begin position="39"/>
        <end position="59"/>
    </location>
</feature>
<feature type="transmembrane region" description="Helical" evidence="1">
    <location>
        <begin position="63"/>
        <end position="83"/>
    </location>
</feature>
<feature type="transmembrane region" description="Helical" evidence="1">
    <location>
        <begin position="99"/>
        <end position="119"/>
    </location>
</feature>
<feature type="transmembrane region" description="Helical" evidence="1">
    <location>
        <begin position="132"/>
        <end position="152"/>
    </location>
</feature>
<feature type="transmembrane region" description="Helical" evidence="1">
    <location>
        <begin position="164"/>
        <end position="184"/>
    </location>
</feature>
<reference key="1">
    <citation type="journal article" date="2007" name="PLoS ONE">
        <title>Paradoxical DNA repair and peroxide resistance gene conservation in Bacillus pumilus SAFR-032.</title>
        <authorList>
            <person name="Gioia J."/>
            <person name="Yerrapragada S."/>
            <person name="Qin X."/>
            <person name="Jiang H."/>
            <person name="Igboeli O.C."/>
            <person name="Muzny D."/>
            <person name="Dugan-Rocha S."/>
            <person name="Ding Y."/>
            <person name="Hawes A."/>
            <person name="Liu W."/>
            <person name="Perez L."/>
            <person name="Kovar C."/>
            <person name="Dinh H."/>
            <person name="Lee S."/>
            <person name="Nazareth L."/>
            <person name="Blyth P."/>
            <person name="Holder M."/>
            <person name="Buhay C."/>
            <person name="Tirumalai M.R."/>
            <person name="Liu Y."/>
            <person name="Dasgupta I."/>
            <person name="Bokhetache L."/>
            <person name="Fujita M."/>
            <person name="Karouia F."/>
            <person name="Eswara Moorthy P."/>
            <person name="Siefert J."/>
            <person name="Uzman A."/>
            <person name="Buzumbo P."/>
            <person name="Verma A."/>
            <person name="Zwiya H."/>
            <person name="McWilliams B.D."/>
            <person name="Olowu A."/>
            <person name="Clinkenbeard K.D."/>
            <person name="Newcombe D."/>
            <person name="Golebiewski L."/>
            <person name="Petrosino J.F."/>
            <person name="Nicholson W.L."/>
            <person name="Fox G.E."/>
            <person name="Venkateswaran K."/>
            <person name="Highlander S.K."/>
            <person name="Weinstock G.M."/>
        </authorList>
    </citation>
    <scope>NUCLEOTIDE SEQUENCE [LARGE SCALE GENOMIC DNA]</scope>
    <source>
        <strain>SAFR-032</strain>
    </source>
</reference>
<evidence type="ECO:0000255" key="1">
    <source>
        <dbReference type="HAMAP-Rule" id="MF_01521"/>
    </source>
</evidence>
<dbReference type="EMBL" id="CP000813">
    <property type="protein sequence ID" value="ABV63992.1"/>
    <property type="molecule type" value="Genomic_DNA"/>
</dbReference>
<dbReference type="RefSeq" id="WP_012011556.1">
    <property type="nucleotide sequence ID" value="NZ_VEIS01000002.1"/>
</dbReference>
<dbReference type="STRING" id="315750.BPUM_3339"/>
<dbReference type="GeneID" id="5622629"/>
<dbReference type="KEGG" id="bpu:BPUM_3339"/>
<dbReference type="eggNOG" id="COG1971">
    <property type="taxonomic scope" value="Bacteria"/>
</dbReference>
<dbReference type="HOGENOM" id="CLU_096410_1_0_9"/>
<dbReference type="OrthoDB" id="1679700at2"/>
<dbReference type="Proteomes" id="UP000001355">
    <property type="component" value="Chromosome"/>
</dbReference>
<dbReference type="GO" id="GO:0005886">
    <property type="term" value="C:plasma membrane"/>
    <property type="evidence" value="ECO:0007669"/>
    <property type="project" value="UniProtKB-SubCell"/>
</dbReference>
<dbReference type="GO" id="GO:0005384">
    <property type="term" value="F:manganese ion transmembrane transporter activity"/>
    <property type="evidence" value="ECO:0007669"/>
    <property type="project" value="UniProtKB-UniRule"/>
</dbReference>
<dbReference type="HAMAP" id="MF_01521">
    <property type="entry name" value="MntP_pump"/>
    <property type="match status" value="1"/>
</dbReference>
<dbReference type="InterPro" id="IPR003810">
    <property type="entry name" value="Mntp/YtaF"/>
</dbReference>
<dbReference type="InterPro" id="IPR022929">
    <property type="entry name" value="Put_MntP"/>
</dbReference>
<dbReference type="PANTHER" id="PTHR35529">
    <property type="entry name" value="MANGANESE EFFLUX PUMP MNTP-RELATED"/>
    <property type="match status" value="1"/>
</dbReference>
<dbReference type="PANTHER" id="PTHR35529:SF1">
    <property type="entry name" value="MANGANESE EFFLUX PUMP MNTP-RELATED"/>
    <property type="match status" value="1"/>
</dbReference>
<dbReference type="Pfam" id="PF02659">
    <property type="entry name" value="Mntp"/>
    <property type="match status" value="1"/>
</dbReference>
<sequence length="184" mass="19803">MYELAGELLTLSIMAFALGMDAFSVGLGMGMIQLRFRQIIYIGLVIGIFHMFMPLFGMLTGQLLSGWLGLLATYIGGALLLVLGLQMIIASIRKEDKPFIAPVGAGLVLFATSVSLDSFSVGLSLGIYGSHVWMTILLFGFFSMILTWLGLLLGKQVRSWVGSYSGALGGIILLAFGIKLLFPL</sequence>